<evidence type="ECO:0000250" key="1"/>
<evidence type="ECO:0000250" key="2">
    <source>
        <dbReference type="UniProtKB" id="Q63151"/>
    </source>
</evidence>
<evidence type="ECO:0000255" key="3"/>
<evidence type="ECO:0000269" key="4">
    <source>
    </source>
</evidence>
<evidence type="ECO:0000269" key="5">
    <source>
    </source>
</evidence>
<evidence type="ECO:0000269" key="6">
    <source>
    </source>
</evidence>
<evidence type="ECO:0000269" key="7">
    <source>
    </source>
</evidence>
<evidence type="ECO:0000305" key="8"/>
<evidence type="ECO:0000305" key="9">
    <source>
    </source>
</evidence>
<evidence type="ECO:0000312" key="10">
    <source>
        <dbReference type="HGNC" id="HGNC:3570"/>
    </source>
</evidence>
<evidence type="ECO:0007744" key="11">
    <source>
    </source>
</evidence>
<evidence type="ECO:0007744" key="12">
    <source>
    </source>
</evidence>
<protein>
    <recommendedName>
        <fullName evidence="8">Fatty acid CoA ligase Acsl3</fullName>
    </recommendedName>
    <alternativeName>
        <fullName evidence="2">Arachidonate--CoA ligase</fullName>
        <ecNumber evidence="2">6.2.1.15</ecNumber>
    </alternativeName>
    <alternativeName>
        <fullName>Long-chain acyl-CoA synthetase 3</fullName>
        <shortName>LACS 3</shortName>
    </alternativeName>
    <alternativeName>
        <fullName evidence="8">Long-chain-fatty-acid--CoA ligase 3</fullName>
        <ecNumber evidence="6">6.2.1.3</ecNumber>
    </alternativeName>
    <alternativeName>
        <fullName evidence="2">Medium-chain acyl-CoA ligase Acsl3</fullName>
        <ecNumber evidence="2">6.2.1.2</ecNumber>
    </alternativeName>
</protein>
<gene>
    <name evidence="10" type="primary">ACSL3</name>
    <name type="synonym">ACS3</name>
    <name type="synonym">FACL3</name>
    <name type="synonym">LACS3</name>
</gene>
<sequence>MNNHVSSKPSTMKLKHTINPILLYFIHFLISLYTILTYIPFYFFSESRQEKSNRIKAKPVNSKPDSAYRSVNSLDGLASVLYPGCDTLDKVFTYAKNKFKNKRLLGTREVLNEEDEVQPNGKIFKKVILGQYNWLSYEDVFVRAFNFGNGLQMLGQKPKTNIAIFCETRAEWMIAAQACFMYNFQLVTLYATLGGPAIVHALNETEVTNIITSKELLQTKLKDIVSLVPRLRHIITVDGKPPTWSEFPKGIIVHTMAAVEALGAKASMENQPHSKPLPSDIAVIMYTSGSTGLPKGVMISHSNIIAGITGMAERIPELGEEDVYIGYLPLAHVLELSAELVCLSHGCRIGYSSPQTLADQSSKIKKGSKGDTSMLKPTLMAAVPEIMDRIYKNVMNKVSEMSSFQRNLFILAYNYKMEQISKGRNTPLCDSFVFRKVRSLLGGNIRLLLCGGAPLSATTQRFMNICFCCPVGQGYGLTESAGAGTISEVWDYNTGRVGAPLVCCEIKLKNWEEGGYFNTDKPHPRGEILIGGQSVTMGYYKNEAKTKADFFEDENGQRWLCTGDIGEFEPDGCLKIIDRKKDLVKLQAGEYVSLGKVEAALKNLPLVDNICAYANSYHSYVIGFVVPNQKELTELARKKGLKGTWEELCNSCEMENEVLKVLSEAAISASLEKFEIPVKIRLSPEPWTPETGLVTDAFKLKRKELKTHYQADIERMYGRK</sequence>
<accession>O95573</accession>
<accession>Q60I92</accession>
<accession>Q8IUM9</accession>
<feature type="chain" id="PRO_0000193107" description="Fatty acid CoA ligase Acsl3">
    <location>
        <begin position="1"/>
        <end position="720"/>
    </location>
</feature>
<feature type="transmembrane region" description="Helical; Signal-anchor for type III membrane protein" evidence="3">
    <location>
        <begin position="21"/>
        <end position="41"/>
    </location>
</feature>
<feature type="topological domain" description="Cytoplasmic" evidence="3">
    <location>
        <begin position="42"/>
        <end position="720"/>
    </location>
</feature>
<feature type="modified residue" description="Phosphoserine" evidence="11 12">
    <location>
        <position position="683"/>
    </location>
</feature>
<feature type="sequence variant" id="VAR_026716" description="In dbSNP:rs1046032." evidence="4 7">
    <original>F</original>
    <variation>S</variation>
    <location>
        <position position="551"/>
    </location>
</feature>
<feature type="sequence conflict" description="In Ref. 1; BAA37142 and 2; BAB72074/BAB72139." evidence="8" ref="1 2">
    <original>E</original>
    <variation>D</variation>
    <location>
        <position position="246"/>
    </location>
</feature>
<reference key="1">
    <citation type="journal article" date="1997" name="Genomics">
        <title>Human acyl-coenzyme A synthetase 3 cDNA and localization of its gene (ACS3) to chromosome band 2q34-q35.</title>
        <authorList>
            <person name="Minekura H."/>
            <person name="Fujino T."/>
            <person name="Kang M.-J."/>
            <person name="Fujita T."/>
            <person name="Endo Y."/>
            <person name="Yamamoto T.T."/>
        </authorList>
    </citation>
    <scope>NUCLEOTIDE SEQUENCE [MRNA]</scope>
    <scope>VARIANT SER-551</scope>
    <source>
        <tissue>Placenta</tissue>
    </source>
</reference>
<reference key="2">
    <citation type="journal article" date="2001" name="Gene">
        <title>Genomic organization and transcription units of the human acyl-CoA synthetase 3 gene.</title>
        <authorList>
            <person name="Minekura H."/>
            <person name="Kang M.-J."/>
            <person name="Inagaki Y."/>
            <person name="Suzuki H."/>
            <person name="Sato H."/>
            <person name="Fujino T."/>
            <person name="Yamamoto T.T."/>
        </authorList>
    </citation>
    <scope>NUCLEOTIDE SEQUENCE [GENOMIC DNA / MRNA]</scope>
    <scope>VARIANT SER-551</scope>
</reference>
<reference key="3">
    <citation type="journal article" date="2004" name="Genome Res.">
        <title>The status, quality, and expansion of the NIH full-length cDNA project: the Mammalian Gene Collection (MGC).</title>
        <authorList>
            <consortium name="The MGC Project Team"/>
        </authorList>
    </citation>
    <scope>NUCLEOTIDE SEQUENCE [LARGE SCALE MRNA]</scope>
    <source>
        <tissue>Pancreas</tissue>
    </source>
</reference>
<reference key="4">
    <citation type="journal article" date="2008" name="J. Biol. Chem.">
        <title>Long chain acyl-CoA synthetase 3-mediated phosphatidylcholine synthesis is required for assembly of very low density lipoproteins in human hepatoma Huh7 cells.</title>
        <authorList>
            <person name="Yao H."/>
            <person name="Ye J."/>
        </authorList>
    </citation>
    <scope>FUNCTION</scope>
</reference>
<reference key="5">
    <citation type="journal article" date="2008" name="Mol. Cell">
        <title>Kinase-selective enrichment enables quantitative phosphoproteomics of the kinome across the cell cycle.</title>
        <authorList>
            <person name="Daub H."/>
            <person name="Olsen J.V."/>
            <person name="Bairlein M."/>
            <person name="Gnad F."/>
            <person name="Oppermann F.S."/>
            <person name="Korner R."/>
            <person name="Greff Z."/>
            <person name="Keri G."/>
            <person name="Stemmann O."/>
            <person name="Mann M."/>
        </authorList>
    </citation>
    <scope>PHOSPHORYLATION [LARGE SCALE ANALYSIS] AT SER-683</scope>
    <scope>IDENTIFICATION BY MASS SPECTROMETRY [LARGE SCALE ANALYSIS]</scope>
    <source>
        <tissue>Cervix carcinoma</tissue>
    </source>
</reference>
<reference key="6">
    <citation type="journal article" date="2011" name="BMC Syst. Biol.">
        <title>Initial characterization of the human central proteome.</title>
        <authorList>
            <person name="Burkard T.R."/>
            <person name="Planyavsky M."/>
            <person name="Kaupe I."/>
            <person name="Breitwieser F.P."/>
            <person name="Buerckstuemmer T."/>
            <person name="Bennett K.L."/>
            <person name="Superti-Furga G."/>
            <person name="Colinge J."/>
        </authorList>
    </citation>
    <scope>IDENTIFICATION BY MASS SPECTROMETRY [LARGE SCALE ANALYSIS]</scope>
</reference>
<reference key="7">
    <citation type="journal article" date="2012" name="Mol. Cell">
        <title>The Sjogren-Larsson syndrome gene encodes a hexadecenal dehydrogenase of the sphingosine 1-phosphate degradation pathway.</title>
        <authorList>
            <person name="Nakahara K."/>
            <person name="Ohkuni A."/>
            <person name="Kitamura T."/>
            <person name="Abe K."/>
            <person name="Naganuma T."/>
            <person name="Ohno Y."/>
            <person name="Zoeller R.A."/>
            <person name="Kihara A."/>
        </authorList>
    </citation>
    <scope>CATALYTIC ACTIVITY</scope>
    <scope>FUNCTION</scope>
</reference>
<reference key="8">
    <citation type="journal article" date="2013" name="J. Proteome Res.">
        <title>Toward a comprehensive characterization of a human cancer cell phosphoproteome.</title>
        <authorList>
            <person name="Zhou H."/>
            <person name="Di Palma S."/>
            <person name="Preisinger C."/>
            <person name="Peng M."/>
            <person name="Polat A.N."/>
            <person name="Heck A.J."/>
            <person name="Mohammed S."/>
        </authorList>
    </citation>
    <scope>PHOSPHORYLATION [LARGE SCALE ANALYSIS] AT SER-683</scope>
    <scope>IDENTIFICATION BY MASS SPECTROMETRY [LARGE SCALE ANALYSIS]</scope>
    <source>
        <tissue>Erythroleukemia</tissue>
    </source>
</reference>
<reference key="9">
    <citation type="journal article" date="2015" name="Proteomics">
        <title>N-terminome analysis of the human mitochondrial proteome.</title>
        <authorList>
            <person name="Vaca Jacome A.S."/>
            <person name="Rabilloud T."/>
            <person name="Schaeffer-Reiss C."/>
            <person name="Rompais M."/>
            <person name="Ayoub D."/>
            <person name="Lane L."/>
            <person name="Bairoch A."/>
            <person name="Van Dorsselaer A."/>
            <person name="Carapito C."/>
        </authorList>
    </citation>
    <scope>IDENTIFICATION BY MASS SPECTROMETRY [LARGE SCALE ANALYSIS]</scope>
</reference>
<dbReference type="EC" id="6.2.1.15" evidence="2"/>
<dbReference type="EC" id="6.2.1.3" evidence="6"/>
<dbReference type="EC" id="6.2.1.2" evidence="2"/>
<dbReference type="EMBL" id="D89053">
    <property type="protein sequence ID" value="BAA37142.1"/>
    <property type="molecule type" value="mRNA"/>
</dbReference>
<dbReference type="EMBL" id="AB061712">
    <property type="protein sequence ID" value="BAB72074.1"/>
    <property type="molecule type" value="mRNA"/>
</dbReference>
<dbReference type="EMBL" id="AB061436">
    <property type="protein sequence ID" value="BAB72139.1"/>
    <property type="molecule type" value="Genomic_DNA"/>
</dbReference>
<dbReference type="EMBL" id="BC041692">
    <property type="protein sequence ID" value="AAH41692.1"/>
    <property type="molecule type" value="mRNA"/>
</dbReference>
<dbReference type="CCDS" id="CCDS2455.1"/>
<dbReference type="RefSeq" id="NP_001341087.1">
    <property type="nucleotide sequence ID" value="NM_001354158.2"/>
</dbReference>
<dbReference type="RefSeq" id="NP_001341088.1">
    <property type="nucleotide sequence ID" value="NM_001354159.2"/>
</dbReference>
<dbReference type="RefSeq" id="NP_004448.2">
    <property type="nucleotide sequence ID" value="NM_004457.3"/>
</dbReference>
<dbReference type="RefSeq" id="NP_976251.1">
    <property type="nucleotide sequence ID" value="NM_203372.3"/>
</dbReference>
<dbReference type="RefSeq" id="XP_016859073.1">
    <property type="nucleotide sequence ID" value="XM_017003584.1"/>
</dbReference>
<dbReference type="SMR" id="O95573"/>
<dbReference type="BioGRID" id="108477">
    <property type="interactions" value="287"/>
</dbReference>
<dbReference type="FunCoup" id="O95573">
    <property type="interactions" value="2394"/>
</dbReference>
<dbReference type="IntAct" id="O95573">
    <property type="interactions" value="112"/>
</dbReference>
<dbReference type="MINT" id="O95573"/>
<dbReference type="STRING" id="9606.ENSP00000350012"/>
<dbReference type="BindingDB" id="O95573"/>
<dbReference type="ChEMBL" id="CHEMBL4680023"/>
<dbReference type="SwissLipids" id="SLP:000000200"/>
<dbReference type="GlyGen" id="O95573">
    <property type="glycosylation" value="1 site, 1 O-linked glycan (1 site)"/>
</dbReference>
<dbReference type="iPTMnet" id="O95573"/>
<dbReference type="MetOSite" id="O95573"/>
<dbReference type="PhosphoSitePlus" id="O95573"/>
<dbReference type="SwissPalm" id="O95573"/>
<dbReference type="BioMuta" id="ACSL3"/>
<dbReference type="jPOST" id="O95573"/>
<dbReference type="MassIVE" id="O95573"/>
<dbReference type="PaxDb" id="9606-ENSP00000350012"/>
<dbReference type="PeptideAtlas" id="O95573"/>
<dbReference type="ProteomicsDB" id="50946"/>
<dbReference type="Pumba" id="O95573"/>
<dbReference type="Antibodypedia" id="1945">
    <property type="antibodies" value="203 antibodies from 29 providers"/>
</dbReference>
<dbReference type="DNASU" id="2181"/>
<dbReference type="Ensembl" id="ENST00000357430.8">
    <property type="protein sequence ID" value="ENSP00000350012.3"/>
    <property type="gene ID" value="ENSG00000123983.15"/>
</dbReference>
<dbReference type="Ensembl" id="ENST00000392066.7">
    <property type="protein sequence ID" value="ENSP00000375918.3"/>
    <property type="gene ID" value="ENSG00000123983.15"/>
</dbReference>
<dbReference type="Ensembl" id="ENST00000679514.1">
    <property type="protein sequence ID" value="ENSP00000506361.1"/>
    <property type="gene ID" value="ENSG00000123983.15"/>
</dbReference>
<dbReference type="Ensembl" id="ENST00000679558.1">
    <property type="protein sequence ID" value="ENSP00000504907.1"/>
    <property type="gene ID" value="ENSG00000123983.15"/>
</dbReference>
<dbReference type="Ensembl" id="ENST00000680147.1">
    <property type="protein sequence ID" value="ENSP00000504861.1"/>
    <property type="gene ID" value="ENSG00000123983.15"/>
</dbReference>
<dbReference type="Ensembl" id="ENST00000680251.1">
    <property type="protein sequence ID" value="ENSP00000505400.1"/>
    <property type="gene ID" value="ENSG00000123983.15"/>
</dbReference>
<dbReference type="Ensembl" id="ENST00000680395.1">
    <property type="protein sequence ID" value="ENSP00000505793.1"/>
    <property type="gene ID" value="ENSG00000123983.15"/>
</dbReference>
<dbReference type="Ensembl" id="ENST00000680684.1">
    <property type="protein sequence ID" value="ENSP00000506468.1"/>
    <property type="gene ID" value="ENSG00000123983.15"/>
</dbReference>
<dbReference type="Ensembl" id="ENST00000680921.1">
    <property type="protein sequence ID" value="ENSP00000505940.1"/>
    <property type="gene ID" value="ENSG00000123983.15"/>
</dbReference>
<dbReference type="Ensembl" id="ENST00000681383.1">
    <property type="protein sequence ID" value="ENSP00000505654.1"/>
    <property type="gene ID" value="ENSG00000123983.15"/>
</dbReference>
<dbReference type="Ensembl" id="ENST00000681697.1">
    <property type="protein sequence ID" value="ENSP00000505856.1"/>
    <property type="gene ID" value="ENSG00000123983.15"/>
</dbReference>
<dbReference type="GeneID" id="2181"/>
<dbReference type="KEGG" id="hsa:2181"/>
<dbReference type="MANE-Select" id="ENST00000357430.8">
    <property type="protein sequence ID" value="ENSP00000350012.3"/>
    <property type="RefSeq nucleotide sequence ID" value="NM_004457.5"/>
    <property type="RefSeq protein sequence ID" value="NP_004448.2"/>
</dbReference>
<dbReference type="UCSC" id="uc002vni.4">
    <property type="organism name" value="human"/>
</dbReference>
<dbReference type="AGR" id="HGNC:3570"/>
<dbReference type="CTD" id="2181"/>
<dbReference type="DisGeNET" id="2181"/>
<dbReference type="GeneCards" id="ACSL3"/>
<dbReference type="HGNC" id="HGNC:3570">
    <property type="gene designation" value="ACSL3"/>
</dbReference>
<dbReference type="HPA" id="ENSG00000123983">
    <property type="expression patterns" value="Tissue enhanced (parathyroid)"/>
</dbReference>
<dbReference type="MIM" id="602371">
    <property type="type" value="gene"/>
</dbReference>
<dbReference type="neXtProt" id="NX_O95573"/>
<dbReference type="OpenTargets" id="ENSG00000123983"/>
<dbReference type="PharmGKB" id="PA27967"/>
<dbReference type="VEuPathDB" id="HostDB:ENSG00000123983"/>
<dbReference type="eggNOG" id="KOG1180">
    <property type="taxonomic scope" value="Eukaryota"/>
</dbReference>
<dbReference type="GeneTree" id="ENSGT00940000155954"/>
<dbReference type="HOGENOM" id="CLU_000022_45_2_1"/>
<dbReference type="InParanoid" id="O95573"/>
<dbReference type="OMA" id="KIFQWAA"/>
<dbReference type="OrthoDB" id="1700726at2759"/>
<dbReference type="PAN-GO" id="O95573">
    <property type="GO annotations" value="7 GO annotations based on evolutionary models"/>
</dbReference>
<dbReference type="PhylomeDB" id="O95573"/>
<dbReference type="TreeFam" id="TF314012"/>
<dbReference type="BioCyc" id="MetaCyc:HS04703-MONOMER"/>
<dbReference type="BRENDA" id="6.2.1.3">
    <property type="organism ID" value="2681"/>
</dbReference>
<dbReference type="PathwayCommons" id="O95573"/>
<dbReference type="Reactome" id="R-HSA-434313">
    <property type="pathway name" value="Intracellular metabolism of fatty acids regulates insulin secretion"/>
</dbReference>
<dbReference type="Reactome" id="R-HSA-75876">
    <property type="pathway name" value="Synthesis of very long-chain fatty acyl-CoAs"/>
</dbReference>
<dbReference type="SignaLink" id="O95573"/>
<dbReference type="BioGRID-ORCS" id="2181">
    <property type="hits" value="216 hits in 1175 CRISPR screens"/>
</dbReference>
<dbReference type="CD-CODE" id="FB4E32DD">
    <property type="entry name" value="Presynaptic clusters and postsynaptic densities"/>
</dbReference>
<dbReference type="ChiTaRS" id="ACSL3">
    <property type="organism name" value="human"/>
</dbReference>
<dbReference type="GeneWiki" id="ACSL3"/>
<dbReference type="GenomeRNAi" id="2181"/>
<dbReference type="Pharos" id="O95573">
    <property type="development level" value="Tbio"/>
</dbReference>
<dbReference type="PRO" id="PR:O95573"/>
<dbReference type="Proteomes" id="UP000005640">
    <property type="component" value="Chromosome 2"/>
</dbReference>
<dbReference type="RNAct" id="O95573">
    <property type="molecule type" value="protein"/>
</dbReference>
<dbReference type="Bgee" id="ENSG00000123983">
    <property type="expression patterns" value="Expressed in endothelial cell and 207 other cell types or tissues"/>
</dbReference>
<dbReference type="ExpressionAtlas" id="O95573">
    <property type="expression patterns" value="baseline and differential"/>
</dbReference>
<dbReference type="GO" id="GO:0005783">
    <property type="term" value="C:endoplasmic reticulum"/>
    <property type="evidence" value="ECO:0000314"/>
    <property type="project" value="UniProtKB"/>
</dbReference>
<dbReference type="GO" id="GO:0005789">
    <property type="term" value="C:endoplasmic reticulum membrane"/>
    <property type="evidence" value="ECO:0000304"/>
    <property type="project" value="Reactome"/>
</dbReference>
<dbReference type="GO" id="GO:0005794">
    <property type="term" value="C:Golgi apparatus"/>
    <property type="evidence" value="ECO:0000314"/>
    <property type="project" value="UniProtKB"/>
</dbReference>
<dbReference type="GO" id="GO:0005811">
    <property type="term" value="C:lipid droplet"/>
    <property type="evidence" value="ECO:0000314"/>
    <property type="project" value="UniProtKB"/>
</dbReference>
<dbReference type="GO" id="GO:0016020">
    <property type="term" value="C:membrane"/>
    <property type="evidence" value="ECO:0007005"/>
    <property type="project" value="UniProtKB"/>
</dbReference>
<dbReference type="GO" id="GO:0005741">
    <property type="term" value="C:mitochondrial outer membrane"/>
    <property type="evidence" value="ECO:0000304"/>
    <property type="project" value="Reactome"/>
</dbReference>
<dbReference type="GO" id="GO:0048471">
    <property type="term" value="C:perinuclear region of cytoplasm"/>
    <property type="evidence" value="ECO:0000314"/>
    <property type="project" value="UniProtKB"/>
</dbReference>
<dbReference type="GO" id="GO:0005778">
    <property type="term" value="C:peroxisomal membrane"/>
    <property type="evidence" value="ECO:0007669"/>
    <property type="project" value="UniProtKB-SubCell"/>
</dbReference>
<dbReference type="GO" id="GO:0005886">
    <property type="term" value="C:plasma membrane"/>
    <property type="evidence" value="ECO:0000318"/>
    <property type="project" value="GO_Central"/>
</dbReference>
<dbReference type="GO" id="GO:0047676">
    <property type="term" value="F:arachidonate-CoA ligase activity"/>
    <property type="evidence" value="ECO:0000250"/>
    <property type="project" value="UniProtKB"/>
</dbReference>
<dbReference type="GO" id="GO:0005524">
    <property type="term" value="F:ATP binding"/>
    <property type="evidence" value="ECO:0007669"/>
    <property type="project" value="UniProtKB-KW"/>
</dbReference>
<dbReference type="GO" id="GO:0004467">
    <property type="term" value="F:long-chain fatty acid-CoA ligase activity"/>
    <property type="evidence" value="ECO:0000315"/>
    <property type="project" value="UniProtKB"/>
</dbReference>
<dbReference type="GO" id="GO:0031956">
    <property type="term" value="F:medium-chain fatty acid-CoA ligase activity"/>
    <property type="evidence" value="ECO:0007669"/>
    <property type="project" value="RHEA"/>
</dbReference>
<dbReference type="GO" id="GO:0090433">
    <property type="term" value="F:palmitoyl-CoA ligase activity"/>
    <property type="evidence" value="ECO:0000304"/>
    <property type="project" value="Reactome"/>
</dbReference>
<dbReference type="GO" id="GO:0019904">
    <property type="term" value="F:protein domain specific binding"/>
    <property type="evidence" value="ECO:0000353"/>
    <property type="project" value="UniProtKB"/>
</dbReference>
<dbReference type="GO" id="GO:0019901">
    <property type="term" value="F:protein kinase binding"/>
    <property type="evidence" value="ECO:0000353"/>
    <property type="project" value="UniProtKB"/>
</dbReference>
<dbReference type="GO" id="GO:0006631">
    <property type="term" value="P:fatty acid metabolic process"/>
    <property type="evidence" value="ECO:0000304"/>
    <property type="project" value="Reactome"/>
</dbReference>
<dbReference type="GO" id="GO:0044539">
    <property type="term" value="P:long-chain fatty acid import into cell"/>
    <property type="evidence" value="ECO:0000314"/>
    <property type="project" value="UniProtKB"/>
</dbReference>
<dbReference type="GO" id="GO:0001676">
    <property type="term" value="P:long-chain fatty acid metabolic process"/>
    <property type="evidence" value="ECO:0000315"/>
    <property type="project" value="UniProtKB"/>
</dbReference>
<dbReference type="GO" id="GO:0035338">
    <property type="term" value="P:long-chain fatty-acyl-CoA biosynthetic process"/>
    <property type="evidence" value="ECO:0000304"/>
    <property type="project" value="Reactome"/>
</dbReference>
<dbReference type="GO" id="GO:0035336">
    <property type="term" value="P:long-chain fatty-acyl-CoA metabolic process"/>
    <property type="evidence" value="ECO:0000318"/>
    <property type="project" value="GO_Central"/>
</dbReference>
<dbReference type="GO" id="GO:0030182">
    <property type="term" value="P:neuron differentiation"/>
    <property type="evidence" value="ECO:0000318"/>
    <property type="project" value="GO_Central"/>
</dbReference>
<dbReference type="GO" id="GO:0042998">
    <property type="term" value="P:positive regulation of Golgi to plasma membrane protein transport"/>
    <property type="evidence" value="ECO:0000315"/>
    <property type="project" value="UniProtKB"/>
</dbReference>
<dbReference type="GO" id="GO:2001247">
    <property type="term" value="P:positive regulation of phosphatidylcholine biosynthetic process"/>
    <property type="evidence" value="ECO:0000315"/>
    <property type="project" value="UniProtKB"/>
</dbReference>
<dbReference type="GO" id="GO:0051047">
    <property type="term" value="P:positive regulation of secretion"/>
    <property type="evidence" value="ECO:0000315"/>
    <property type="project" value="UniProtKB"/>
</dbReference>
<dbReference type="GO" id="GO:0034379">
    <property type="term" value="P:very-low-density lipoprotein particle assembly"/>
    <property type="evidence" value="ECO:0000315"/>
    <property type="project" value="UniProtKB"/>
</dbReference>
<dbReference type="CDD" id="cd17639">
    <property type="entry name" value="LC_FACS_euk1"/>
    <property type="match status" value="1"/>
</dbReference>
<dbReference type="Gene3D" id="3.40.50.12780">
    <property type="entry name" value="N-terminal domain of ligase-like"/>
    <property type="match status" value="1"/>
</dbReference>
<dbReference type="InterPro" id="IPR020845">
    <property type="entry name" value="AMP-binding_CS"/>
</dbReference>
<dbReference type="InterPro" id="IPR000873">
    <property type="entry name" value="AMP-dep_synth/lig_dom"/>
</dbReference>
<dbReference type="InterPro" id="IPR042099">
    <property type="entry name" value="ANL_N_sf"/>
</dbReference>
<dbReference type="PANTHER" id="PTHR43272:SF13">
    <property type="entry name" value="FATTY ACID COA LIGASE ACSL3"/>
    <property type="match status" value="1"/>
</dbReference>
<dbReference type="PANTHER" id="PTHR43272">
    <property type="entry name" value="LONG-CHAIN-FATTY-ACID--COA LIGASE"/>
    <property type="match status" value="1"/>
</dbReference>
<dbReference type="Pfam" id="PF00501">
    <property type="entry name" value="AMP-binding"/>
    <property type="match status" value="1"/>
</dbReference>
<dbReference type="SUPFAM" id="SSF56801">
    <property type="entry name" value="Acetyl-CoA synthetase-like"/>
    <property type="match status" value="1"/>
</dbReference>
<dbReference type="PROSITE" id="PS00455">
    <property type="entry name" value="AMP_BINDING"/>
    <property type="match status" value="1"/>
</dbReference>
<proteinExistence type="evidence at protein level"/>
<name>ACSL3_HUMAN</name>
<comment type="function">
    <text evidence="2 5 6">Acyl-CoA synthetases (ACSL) activates long-chain fatty acids for both synthesis of cellular lipids, and degradation via beta-oxidation (PubMed:22633490). Required for the incorporation of fatty acids into phosphatidylcholine, the major phospholipid located on the surface of VLDL (very low density lipoproteins) (PubMed:18003621). Has mainly an anabolic role in energy metabolism. Mediates hepatic lipogenesis. Preferentially uses myristate, laurate, arachidonate and eicosapentaenoate as substrates. Both isoforms exhibit the same level of activity (By similarity).</text>
</comment>
<comment type="catalytic activity">
    <reaction evidence="6">
        <text>a long-chain fatty acid + ATP + CoA = a long-chain fatty acyl-CoA + AMP + diphosphate</text>
        <dbReference type="Rhea" id="RHEA:15421"/>
        <dbReference type="ChEBI" id="CHEBI:30616"/>
        <dbReference type="ChEBI" id="CHEBI:33019"/>
        <dbReference type="ChEBI" id="CHEBI:57287"/>
        <dbReference type="ChEBI" id="CHEBI:57560"/>
        <dbReference type="ChEBI" id="CHEBI:83139"/>
        <dbReference type="ChEBI" id="CHEBI:456215"/>
        <dbReference type="EC" id="6.2.1.3"/>
    </reaction>
    <physiologicalReaction direction="left-to-right" evidence="9">
        <dbReference type="Rhea" id="RHEA:15422"/>
    </physiologicalReaction>
</comment>
<comment type="catalytic activity">
    <reaction evidence="2">
        <text>(5Z,8Z,11Z,14Z)-eicosatetraenoate + ATP + CoA = (5Z,8Z,11Z,14Z)-eicosatetraenoyl-CoA + AMP + diphosphate</text>
        <dbReference type="Rhea" id="RHEA:19713"/>
        <dbReference type="ChEBI" id="CHEBI:30616"/>
        <dbReference type="ChEBI" id="CHEBI:32395"/>
        <dbReference type="ChEBI" id="CHEBI:33019"/>
        <dbReference type="ChEBI" id="CHEBI:57287"/>
        <dbReference type="ChEBI" id="CHEBI:57368"/>
        <dbReference type="ChEBI" id="CHEBI:456215"/>
        <dbReference type="EC" id="6.2.1.15"/>
    </reaction>
    <physiologicalReaction direction="left-to-right" evidence="2">
        <dbReference type="Rhea" id="RHEA:19714"/>
    </physiologicalReaction>
</comment>
<comment type="catalytic activity">
    <reaction evidence="6">
        <text>(E)-hexadec-2-enoate + ATP + CoA = (2E)-hexadecenoyl-CoA + AMP + diphosphate</text>
        <dbReference type="Rhea" id="RHEA:36139"/>
        <dbReference type="ChEBI" id="CHEBI:30616"/>
        <dbReference type="ChEBI" id="CHEBI:33019"/>
        <dbReference type="ChEBI" id="CHEBI:57287"/>
        <dbReference type="ChEBI" id="CHEBI:61526"/>
        <dbReference type="ChEBI" id="CHEBI:72745"/>
        <dbReference type="ChEBI" id="CHEBI:456215"/>
    </reaction>
    <physiologicalReaction direction="left-to-right" evidence="9">
        <dbReference type="Rhea" id="RHEA:36140"/>
    </physiologicalReaction>
</comment>
<comment type="catalytic activity">
    <reaction evidence="2">
        <text>15-hydroxy-(5Z,8Z,11Z,13E)-eicosatetraenoate + ATP + CoA = 15-hydroxy-(5Z,8Z,11Z,13E)-eicosatetraenoyl-CoA + AMP + diphosphate</text>
        <dbReference type="Rhea" id="RHEA:52116"/>
        <dbReference type="ChEBI" id="CHEBI:30616"/>
        <dbReference type="ChEBI" id="CHEBI:33019"/>
        <dbReference type="ChEBI" id="CHEBI:57287"/>
        <dbReference type="ChEBI" id="CHEBI:78832"/>
        <dbReference type="ChEBI" id="CHEBI:136409"/>
        <dbReference type="ChEBI" id="CHEBI:456215"/>
    </reaction>
    <physiologicalReaction direction="left-to-right" evidence="2">
        <dbReference type="Rhea" id="RHEA:52117"/>
    </physiologicalReaction>
</comment>
<comment type="catalytic activity">
    <reaction evidence="2">
        <text>12-hydroxy-(5Z,8Z,10E,14Z)-eicosatetraenoate + ATP + CoA = 12-hydroxy-(5Z,8Z,10E,14Z)-eicosatetraenoyl-CoA + AMP + diphosphate</text>
        <dbReference type="Rhea" id="RHEA:52112"/>
        <dbReference type="ChEBI" id="CHEBI:30616"/>
        <dbReference type="ChEBI" id="CHEBI:33019"/>
        <dbReference type="ChEBI" id="CHEBI:57287"/>
        <dbReference type="ChEBI" id="CHEBI:90718"/>
        <dbReference type="ChEBI" id="CHEBI:136408"/>
        <dbReference type="ChEBI" id="CHEBI:456215"/>
    </reaction>
    <physiologicalReaction direction="left-to-right" evidence="2">
        <dbReference type="Rhea" id="RHEA:52113"/>
    </physiologicalReaction>
</comment>
<comment type="catalytic activity">
    <reaction evidence="2">
        <text>5-hydroxy-(6E,8Z,11Z,14Z)-eicosatetraenoate + ATP + CoA = 5-hydroxy-(6E,8Z,11Z,14Z)-eicosatetraenoyl-CoA + AMP + diphosphate</text>
        <dbReference type="Rhea" id="RHEA:52108"/>
        <dbReference type="ChEBI" id="CHEBI:30616"/>
        <dbReference type="ChEBI" id="CHEBI:33019"/>
        <dbReference type="ChEBI" id="CHEBI:57287"/>
        <dbReference type="ChEBI" id="CHEBI:65341"/>
        <dbReference type="ChEBI" id="CHEBI:136407"/>
        <dbReference type="ChEBI" id="CHEBI:456215"/>
    </reaction>
    <physiologicalReaction direction="left-to-right" evidence="2">
        <dbReference type="Rhea" id="RHEA:52109"/>
    </physiologicalReaction>
</comment>
<comment type="catalytic activity">
    <reaction evidence="2">
        <text>14,15-epoxy-(5Z,8Z,11Z)-eicosatrienoate + ATP + CoA = 14,15-epoxy-(5Z,8Z,11Z)-eicosatrienoyl-CoA + AMP + diphosphate</text>
        <dbReference type="Rhea" id="RHEA:52016"/>
        <dbReference type="ChEBI" id="CHEBI:30616"/>
        <dbReference type="ChEBI" id="CHEBI:33019"/>
        <dbReference type="ChEBI" id="CHEBI:57287"/>
        <dbReference type="ChEBI" id="CHEBI:84024"/>
        <dbReference type="ChEBI" id="CHEBI:136117"/>
        <dbReference type="ChEBI" id="CHEBI:456215"/>
    </reaction>
    <physiologicalReaction direction="left-to-right" evidence="2">
        <dbReference type="Rhea" id="RHEA:52017"/>
    </physiologicalReaction>
</comment>
<comment type="catalytic activity">
    <reaction evidence="2">
        <text>11,12-epoxy-(5Z,8Z,14Z)-eicosatrienoate + ATP + CoA = 11,12-epoxy-(5Z,8Z,14Z)-eicosatrienoyl-CoA + AMP + diphosphate</text>
        <dbReference type="Rhea" id="RHEA:52012"/>
        <dbReference type="ChEBI" id="CHEBI:30616"/>
        <dbReference type="ChEBI" id="CHEBI:33019"/>
        <dbReference type="ChEBI" id="CHEBI:57287"/>
        <dbReference type="ChEBI" id="CHEBI:76625"/>
        <dbReference type="ChEBI" id="CHEBI:136115"/>
        <dbReference type="ChEBI" id="CHEBI:456215"/>
    </reaction>
    <physiologicalReaction direction="left-to-right" evidence="2">
        <dbReference type="Rhea" id="RHEA:52013"/>
    </physiologicalReaction>
</comment>
<comment type="catalytic activity">
    <reaction evidence="2">
        <text>a medium-chain fatty acid + ATP + CoA = a medium-chain fatty acyl-CoA + AMP + diphosphate</text>
        <dbReference type="Rhea" id="RHEA:48340"/>
        <dbReference type="ChEBI" id="CHEBI:30616"/>
        <dbReference type="ChEBI" id="CHEBI:33019"/>
        <dbReference type="ChEBI" id="CHEBI:57287"/>
        <dbReference type="ChEBI" id="CHEBI:59558"/>
        <dbReference type="ChEBI" id="CHEBI:90546"/>
        <dbReference type="ChEBI" id="CHEBI:456215"/>
        <dbReference type="EC" id="6.2.1.2"/>
    </reaction>
    <physiologicalReaction direction="left-to-right" evidence="2">
        <dbReference type="Rhea" id="RHEA:48341"/>
    </physiologicalReaction>
</comment>
<comment type="catalytic activity">
    <reaction evidence="2">
        <text>hexadecanoate + ATP + CoA = hexadecanoyl-CoA + AMP + diphosphate</text>
        <dbReference type="Rhea" id="RHEA:30751"/>
        <dbReference type="ChEBI" id="CHEBI:7896"/>
        <dbReference type="ChEBI" id="CHEBI:30616"/>
        <dbReference type="ChEBI" id="CHEBI:33019"/>
        <dbReference type="ChEBI" id="CHEBI:57287"/>
        <dbReference type="ChEBI" id="CHEBI:57379"/>
        <dbReference type="ChEBI" id="CHEBI:456215"/>
    </reaction>
    <physiologicalReaction direction="left-to-right" evidence="2">
        <dbReference type="Rhea" id="RHEA:30752"/>
    </physiologicalReaction>
</comment>
<comment type="catalytic activity">
    <reaction evidence="2">
        <text>tetradecanoate + ATP + CoA = tetradecanoyl-CoA + AMP + diphosphate</text>
        <dbReference type="Rhea" id="RHEA:33619"/>
        <dbReference type="ChEBI" id="CHEBI:30616"/>
        <dbReference type="ChEBI" id="CHEBI:30807"/>
        <dbReference type="ChEBI" id="CHEBI:33019"/>
        <dbReference type="ChEBI" id="CHEBI:57287"/>
        <dbReference type="ChEBI" id="CHEBI:57385"/>
        <dbReference type="ChEBI" id="CHEBI:456215"/>
    </reaction>
    <physiologicalReaction direction="left-to-right" evidence="2">
        <dbReference type="Rhea" id="RHEA:33620"/>
    </physiologicalReaction>
</comment>
<comment type="catalytic activity">
    <reaction evidence="2">
        <text>dodecanoate + ATP + CoA = dodecanoyl-CoA + AMP + diphosphate</text>
        <dbReference type="Rhea" id="RHEA:33623"/>
        <dbReference type="ChEBI" id="CHEBI:18262"/>
        <dbReference type="ChEBI" id="CHEBI:30616"/>
        <dbReference type="ChEBI" id="CHEBI:33019"/>
        <dbReference type="ChEBI" id="CHEBI:57287"/>
        <dbReference type="ChEBI" id="CHEBI:57375"/>
        <dbReference type="ChEBI" id="CHEBI:456215"/>
    </reaction>
    <physiologicalReaction direction="left-to-right" evidence="2">
        <dbReference type="Rhea" id="RHEA:33624"/>
    </physiologicalReaction>
</comment>
<comment type="catalytic activity">
    <reaction evidence="2">
        <text>octadecanoate + ATP + CoA = octadecanoyl-CoA + AMP + diphosphate</text>
        <dbReference type="Rhea" id="RHEA:33615"/>
        <dbReference type="ChEBI" id="CHEBI:25629"/>
        <dbReference type="ChEBI" id="CHEBI:30616"/>
        <dbReference type="ChEBI" id="CHEBI:33019"/>
        <dbReference type="ChEBI" id="CHEBI:57287"/>
        <dbReference type="ChEBI" id="CHEBI:57394"/>
        <dbReference type="ChEBI" id="CHEBI:456215"/>
    </reaction>
    <physiologicalReaction direction="left-to-right" evidence="2">
        <dbReference type="Rhea" id="RHEA:33616"/>
    </physiologicalReaction>
</comment>
<comment type="catalytic activity">
    <reaction evidence="2">
        <text>eicosanoate + ATP + CoA = eicosanoyl-CoA + AMP + diphosphate</text>
        <dbReference type="Rhea" id="RHEA:46208"/>
        <dbReference type="ChEBI" id="CHEBI:30616"/>
        <dbReference type="ChEBI" id="CHEBI:32360"/>
        <dbReference type="ChEBI" id="CHEBI:33019"/>
        <dbReference type="ChEBI" id="CHEBI:57287"/>
        <dbReference type="ChEBI" id="CHEBI:57380"/>
        <dbReference type="ChEBI" id="CHEBI:456215"/>
    </reaction>
    <physiologicalReaction direction="left-to-right" evidence="2">
        <dbReference type="Rhea" id="RHEA:46209"/>
    </physiologicalReaction>
</comment>
<comment type="catalytic activity">
    <reaction evidence="2">
        <text>(9Z)-octadecenoate + ATP + CoA = (9Z)-octadecenoyl-CoA + AMP + diphosphate</text>
        <dbReference type="Rhea" id="RHEA:33607"/>
        <dbReference type="ChEBI" id="CHEBI:30616"/>
        <dbReference type="ChEBI" id="CHEBI:30823"/>
        <dbReference type="ChEBI" id="CHEBI:33019"/>
        <dbReference type="ChEBI" id="CHEBI:57287"/>
        <dbReference type="ChEBI" id="CHEBI:57387"/>
        <dbReference type="ChEBI" id="CHEBI:456215"/>
    </reaction>
    <physiologicalReaction direction="left-to-right" evidence="2">
        <dbReference type="Rhea" id="RHEA:33608"/>
    </physiologicalReaction>
</comment>
<comment type="catalytic activity">
    <reaction evidence="2">
        <text>(9Z)-hexadecenoate + ATP + CoA = (9Z)-hexadecenoyl-CoA + AMP + diphosphate</text>
        <dbReference type="Rhea" id="RHEA:33647"/>
        <dbReference type="ChEBI" id="CHEBI:30616"/>
        <dbReference type="ChEBI" id="CHEBI:32372"/>
        <dbReference type="ChEBI" id="CHEBI:33019"/>
        <dbReference type="ChEBI" id="CHEBI:57287"/>
        <dbReference type="ChEBI" id="CHEBI:61540"/>
        <dbReference type="ChEBI" id="CHEBI:456215"/>
    </reaction>
    <physiologicalReaction direction="left-to-right" evidence="2">
        <dbReference type="Rhea" id="RHEA:33648"/>
    </physiologicalReaction>
</comment>
<comment type="catalytic activity">
    <reaction evidence="2">
        <text>(9Z,12Z)-octadecadienoate + ATP + CoA = (9Z,12Z)-octadecadienoyl-CoA + AMP + diphosphate</text>
        <dbReference type="Rhea" id="RHEA:33651"/>
        <dbReference type="ChEBI" id="CHEBI:30245"/>
        <dbReference type="ChEBI" id="CHEBI:30616"/>
        <dbReference type="ChEBI" id="CHEBI:33019"/>
        <dbReference type="ChEBI" id="CHEBI:57287"/>
        <dbReference type="ChEBI" id="CHEBI:57383"/>
        <dbReference type="ChEBI" id="CHEBI:456215"/>
    </reaction>
</comment>
<comment type="catalytic activity">
    <reaction evidence="2">
        <text>(9Z,12Z,15Z)-octadecatrienoate + ATP + CoA = (9Z,12Z,15Z)-octadecatrienoyl-CoA + AMP + diphosphate</text>
        <dbReference type="Rhea" id="RHEA:44936"/>
        <dbReference type="ChEBI" id="CHEBI:30616"/>
        <dbReference type="ChEBI" id="CHEBI:32387"/>
        <dbReference type="ChEBI" id="CHEBI:33019"/>
        <dbReference type="ChEBI" id="CHEBI:57287"/>
        <dbReference type="ChEBI" id="CHEBI:74034"/>
        <dbReference type="ChEBI" id="CHEBI:456215"/>
    </reaction>
    <physiologicalReaction direction="left-to-right" evidence="2">
        <dbReference type="Rhea" id="RHEA:44937"/>
    </physiologicalReaction>
</comment>
<comment type="catalytic activity">
    <reaction evidence="2">
        <text>(4Z,7Z,10Z,13Z,16Z,19Z)-docosahexaenoate + ATP + CoA = (4Z,7Z,10Z,13Z,16Z,19Z)-docosahexaenoyl-CoA + AMP + diphosphate</text>
        <dbReference type="Rhea" id="RHEA:44932"/>
        <dbReference type="ChEBI" id="CHEBI:30616"/>
        <dbReference type="ChEBI" id="CHEBI:33019"/>
        <dbReference type="ChEBI" id="CHEBI:57287"/>
        <dbReference type="ChEBI" id="CHEBI:74298"/>
        <dbReference type="ChEBI" id="CHEBI:77016"/>
        <dbReference type="ChEBI" id="CHEBI:456215"/>
    </reaction>
    <physiologicalReaction direction="left-to-right" evidence="2">
        <dbReference type="Rhea" id="RHEA:44933"/>
    </physiologicalReaction>
</comment>
<comment type="catalytic activity">
    <reaction evidence="2">
        <text>(5Z,8Z,11Z,14Z,17Z)-eicosapentaenoate + ATP + CoA = (5Z,8Z,11Z,14Z,17Z)-eicosapentaenoyl-CoA + AMP + diphosphate</text>
        <dbReference type="Rhea" id="RHEA:67848"/>
        <dbReference type="ChEBI" id="CHEBI:30616"/>
        <dbReference type="ChEBI" id="CHEBI:33019"/>
        <dbReference type="ChEBI" id="CHEBI:57287"/>
        <dbReference type="ChEBI" id="CHEBI:58562"/>
        <dbReference type="ChEBI" id="CHEBI:73862"/>
        <dbReference type="ChEBI" id="CHEBI:456215"/>
    </reaction>
    <physiologicalReaction direction="left-to-right" evidence="2">
        <dbReference type="Rhea" id="RHEA:67849"/>
    </physiologicalReaction>
</comment>
<comment type="catalytic activity">
    <reaction evidence="2">
        <text>a fatty acid + ATP + CoA = a fatty acyl-CoA + AMP + diphosphate</text>
        <dbReference type="Rhea" id="RHEA:38883"/>
        <dbReference type="ChEBI" id="CHEBI:28868"/>
        <dbReference type="ChEBI" id="CHEBI:30616"/>
        <dbReference type="ChEBI" id="CHEBI:33019"/>
        <dbReference type="ChEBI" id="CHEBI:57287"/>
        <dbReference type="ChEBI" id="CHEBI:77636"/>
        <dbReference type="ChEBI" id="CHEBI:456215"/>
    </reaction>
    <physiologicalReaction direction="left-to-right" evidence="2">
        <dbReference type="Rhea" id="RHEA:38884"/>
    </physiologicalReaction>
</comment>
<comment type="cofactor">
    <cofactor evidence="1">
        <name>Mg(2+)</name>
        <dbReference type="ChEBI" id="CHEBI:18420"/>
    </cofactor>
</comment>
<comment type="interaction">
    <interactant intactId="EBI-1190822">
        <id>O95573</id>
    </interactant>
    <interactant intactId="EBI-2797775">
        <id>P56962</id>
        <label>STX17</label>
    </interactant>
    <organismsDiffer>false</organismsDiffer>
    <experiments>5</experiments>
</comment>
<comment type="subcellular location">
    <subcellularLocation>
        <location evidence="1">Mitochondrion outer membrane</location>
        <topology evidence="1">Single-pass type III membrane protein</topology>
    </subcellularLocation>
    <subcellularLocation>
        <location evidence="1">Peroxisome membrane</location>
        <topology evidence="1">Single-pass type III membrane protein</topology>
    </subcellularLocation>
    <subcellularLocation>
        <location evidence="1">Microsome membrane</location>
        <topology evidence="1">Single-pass type III membrane protein</topology>
    </subcellularLocation>
    <subcellularLocation>
        <location evidence="1">Endoplasmic reticulum membrane</location>
        <topology evidence="1">Single-pass type III membrane protein</topology>
    </subcellularLocation>
</comment>
<comment type="similarity">
    <text evidence="8">Belongs to the ATP-dependent AMP-binding enzyme family.</text>
</comment>
<keyword id="KW-0067">ATP-binding</keyword>
<keyword id="KW-0256">Endoplasmic reticulum</keyword>
<keyword id="KW-0276">Fatty acid metabolism</keyword>
<keyword id="KW-0436">Ligase</keyword>
<keyword id="KW-0443">Lipid metabolism</keyword>
<keyword id="KW-0460">Magnesium</keyword>
<keyword id="KW-0472">Membrane</keyword>
<keyword id="KW-0492">Microsome</keyword>
<keyword id="KW-0496">Mitochondrion</keyword>
<keyword id="KW-1000">Mitochondrion outer membrane</keyword>
<keyword id="KW-0547">Nucleotide-binding</keyword>
<keyword id="KW-0576">Peroxisome</keyword>
<keyword id="KW-0597">Phosphoprotein</keyword>
<keyword id="KW-1267">Proteomics identification</keyword>
<keyword id="KW-1185">Reference proteome</keyword>
<keyword id="KW-0735">Signal-anchor</keyword>
<keyword id="KW-0812">Transmembrane</keyword>
<keyword id="KW-1133">Transmembrane helix</keyword>
<organism>
    <name type="scientific">Homo sapiens</name>
    <name type="common">Human</name>
    <dbReference type="NCBI Taxonomy" id="9606"/>
    <lineage>
        <taxon>Eukaryota</taxon>
        <taxon>Metazoa</taxon>
        <taxon>Chordata</taxon>
        <taxon>Craniata</taxon>
        <taxon>Vertebrata</taxon>
        <taxon>Euteleostomi</taxon>
        <taxon>Mammalia</taxon>
        <taxon>Eutheria</taxon>
        <taxon>Euarchontoglires</taxon>
        <taxon>Primates</taxon>
        <taxon>Haplorrhini</taxon>
        <taxon>Catarrhini</taxon>
        <taxon>Hominidae</taxon>
        <taxon>Homo</taxon>
    </lineage>
</organism>